<name>ELYA_ALKAL</name>
<dbReference type="EC" id="3.4.21.-"/>
<dbReference type="EMBL" id="M65086">
    <property type="protein sequence ID" value="AAA22212.1"/>
    <property type="molecule type" value="Genomic_DNA"/>
</dbReference>
<dbReference type="PIR" id="A49778">
    <property type="entry name" value="A49778"/>
</dbReference>
<dbReference type="PDB" id="1AH2">
    <property type="method" value="NMR"/>
    <property type="chains" value="A=112-380"/>
</dbReference>
<dbReference type="PDBsum" id="1AH2"/>
<dbReference type="SMR" id="P27693"/>
<dbReference type="DrugBank" id="DB01973">
    <property type="generic name" value="O-Benzylsulfonyl-Serine"/>
</dbReference>
<dbReference type="MEROPS" id="S08.038"/>
<dbReference type="SABIO-RK" id="P27693"/>
<dbReference type="EvolutionaryTrace" id="P27693"/>
<dbReference type="GO" id="GO:0005576">
    <property type="term" value="C:extracellular region"/>
    <property type="evidence" value="ECO:0007669"/>
    <property type="project" value="UniProtKB-SubCell"/>
</dbReference>
<dbReference type="GO" id="GO:0046872">
    <property type="term" value="F:metal ion binding"/>
    <property type="evidence" value="ECO:0007669"/>
    <property type="project" value="UniProtKB-KW"/>
</dbReference>
<dbReference type="GO" id="GO:0004252">
    <property type="term" value="F:serine-type endopeptidase activity"/>
    <property type="evidence" value="ECO:0007669"/>
    <property type="project" value="InterPro"/>
</dbReference>
<dbReference type="GO" id="GO:0006508">
    <property type="term" value="P:proteolysis"/>
    <property type="evidence" value="ECO:0007669"/>
    <property type="project" value="UniProtKB-KW"/>
</dbReference>
<dbReference type="CDD" id="cd07477">
    <property type="entry name" value="Peptidases_S8_Subtilisin_subset"/>
    <property type="match status" value="1"/>
</dbReference>
<dbReference type="Gene3D" id="3.30.70.80">
    <property type="entry name" value="Peptidase S8 propeptide/proteinase inhibitor I9"/>
    <property type="match status" value="1"/>
</dbReference>
<dbReference type="Gene3D" id="3.40.50.200">
    <property type="entry name" value="Peptidase S8/S53 domain"/>
    <property type="match status" value="1"/>
</dbReference>
<dbReference type="InterPro" id="IPR000209">
    <property type="entry name" value="Peptidase_S8/S53_dom"/>
</dbReference>
<dbReference type="InterPro" id="IPR036852">
    <property type="entry name" value="Peptidase_S8/S53_dom_sf"/>
</dbReference>
<dbReference type="InterPro" id="IPR023827">
    <property type="entry name" value="Peptidase_S8_Asp-AS"/>
</dbReference>
<dbReference type="InterPro" id="IPR022398">
    <property type="entry name" value="Peptidase_S8_His-AS"/>
</dbReference>
<dbReference type="InterPro" id="IPR023828">
    <property type="entry name" value="Peptidase_S8_Ser-AS"/>
</dbReference>
<dbReference type="InterPro" id="IPR050131">
    <property type="entry name" value="Peptidase_S8_subtilisin-like"/>
</dbReference>
<dbReference type="InterPro" id="IPR015500">
    <property type="entry name" value="Peptidase_S8_subtilisin-rel"/>
</dbReference>
<dbReference type="InterPro" id="IPR010259">
    <property type="entry name" value="S8pro/Inhibitor_I9"/>
</dbReference>
<dbReference type="InterPro" id="IPR037045">
    <property type="entry name" value="S8pro/Inhibitor_I9_sf"/>
</dbReference>
<dbReference type="InterPro" id="IPR034202">
    <property type="entry name" value="Subtilisin_Carlsberg-like"/>
</dbReference>
<dbReference type="PANTHER" id="PTHR43806:SF11">
    <property type="entry name" value="CEREVISIN-RELATED"/>
    <property type="match status" value="1"/>
</dbReference>
<dbReference type="PANTHER" id="PTHR43806">
    <property type="entry name" value="PEPTIDASE S8"/>
    <property type="match status" value="1"/>
</dbReference>
<dbReference type="Pfam" id="PF05922">
    <property type="entry name" value="Inhibitor_I9"/>
    <property type="match status" value="1"/>
</dbReference>
<dbReference type="Pfam" id="PF00082">
    <property type="entry name" value="Peptidase_S8"/>
    <property type="match status" value="1"/>
</dbReference>
<dbReference type="PRINTS" id="PR00723">
    <property type="entry name" value="SUBTILISIN"/>
</dbReference>
<dbReference type="SUPFAM" id="SSF54897">
    <property type="entry name" value="Protease propeptides/inhibitors"/>
    <property type="match status" value="1"/>
</dbReference>
<dbReference type="SUPFAM" id="SSF52743">
    <property type="entry name" value="Subtilisin-like"/>
    <property type="match status" value="1"/>
</dbReference>
<dbReference type="PROSITE" id="PS51892">
    <property type="entry name" value="SUBTILASE"/>
    <property type="match status" value="1"/>
</dbReference>
<dbReference type="PROSITE" id="PS00136">
    <property type="entry name" value="SUBTILASE_ASP"/>
    <property type="match status" value="1"/>
</dbReference>
<dbReference type="PROSITE" id="PS00137">
    <property type="entry name" value="SUBTILASE_HIS"/>
    <property type="match status" value="1"/>
</dbReference>
<dbReference type="PROSITE" id="PS00138">
    <property type="entry name" value="SUBTILASE_SER"/>
    <property type="match status" value="1"/>
</dbReference>
<feature type="signal peptide" evidence="1">
    <location>
        <begin position="1"/>
        <end position="27"/>
    </location>
</feature>
<feature type="propeptide" id="PRO_0000027008">
    <location>
        <begin position="28"/>
        <end position="112"/>
    </location>
</feature>
<feature type="chain" id="PRO_0000027009" description="Alkaline protease">
    <location>
        <begin position="113"/>
        <end position="380"/>
    </location>
</feature>
<feature type="domain" description="Inhibitor I9" evidence="1">
    <location>
        <begin position="34"/>
        <end position="111"/>
    </location>
</feature>
<feature type="domain" description="Peptidase S8" evidence="2">
    <location>
        <begin position="116"/>
        <end position="379"/>
    </location>
</feature>
<feature type="active site" description="Charge relay system" evidence="2">
    <location>
        <position position="143"/>
    </location>
</feature>
<feature type="active site" description="Charge relay system" evidence="2">
    <location>
        <position position="173"/>
    </location>
</feature>
<feature type="active site" description="Charge relay system" evidence="2">
    <location>
        <position position="326"/>
    </location>
</feature>
<feature type="binding site">
    <location>
        <position position="113"/>
    </location>
    <ligand>
        <name>Ca(2+)</name>
        <dbReference type="ChEBI" id="CHEBI:29108"/>
        <label>1</label>
    </ligand>
</feature>
<feature type="binding site">
    <location>
        <position position="151"/>
    </location>
    <ligand>
        <name>Ca(2+)</name>
        <dbReference type="ChEBI" id="CHEBI:29108"/>
        <label>1</label>
    </ligand>
</feature>
<feature type="binding site">
    <location>
        <position position="184"/>
    </location>
    <ligand>
        <name>Ca(2+)</name>
        <dbReference type="ChEBI" id="CHEBI:29108"/>
        <label>1</label>
    </ligand>
</feature>
<feature type="binding site">
    <location>
        <position position="186"/>
    </location>
    <ligand>
        <name>Ca(2+)</name>
        <dbReference type="ChEBI" id="CHEBI:29108"/>
        <label>1</label>
    </ligand>
</feature>
<feature type="binding site">
    <location>
        <position position="188"/>
    </location>
    <ligand>
        <name>Ca(2+)</name>
        <dbReference type="ChEBI" id="CHEBI:29108"/>
        <label>1</label>
    </ligand>
</feature>
<feature type="binding site">
    <location>
        <position position="190"/>
    </location>
    <ligand>
        <name>Ca(2+)</name>
        <dbReference type="ChEBI" id="CHEBI:29108"/>
        <label>1</label>
    </ligand>
</feature>
<feature type="binding site">
    <location>
        <position position="274"/>
    </location>
    <ligand>
        <name>Ca(2+)</name>
        <dbReference type="ChEBI" id="CHEBI:29108"/>
        <label>2</label>
    </ligand>
</feature>
<feature type="binding site">
    <location>
        <position position="276"/>
    </location>
    <ligand>
        <name>Ca(2+)</name>
        <dbReference type="ChEBI" id="CHEBI:29108"/>
        <label>2</label>
    </ligand>
</feature>
<feature type="binding site">
    <location>
        <position position="279"/>
    </location>
    <ligand>
        <name>Ca(2+)</name>
        <dbReference type="ChEBI" id="CHEBI:29108"/>
        <label>2</label>
    </ligand>
</feature>
<feature type="helix" evidence="4">
    <location>
        <begin position="117"/>
        <end position="120"/>
    </location>
</feature>
<feature type="turn" evidence="4">
    <location>
        <begin position="121"/>
        <end position="123"/>
    </location>
</feature>
<feature type="helix" evidence="4">
    <location>
        <begin position="125"/>
        <end position="130"/>
    </location>
</feature>
<feature type="strand" evidence="4">
    <location>
        <begin position="138"/>
        <end position="144"/>
    </location>
</feature>
<feature type="strand" evidence="4">
    <location>
        <begin position="170"/>
        <end position="172"/>
    </location>
</feature>
<feature type="helix" evidence="4">
    <location>
        <begin position="173"/>
        <end position="182"/>
    </location>
</feature>
<feature type="strand" evidence="4">
    <location>
        <begin position="186"/>
        <end position="189"/>
    </location>
</feature>
<feature type="strand" evidence="4">
    <location>
        <begin position="195"/>
        <end position="201"/>
    </location>
</feature>
<feature type="helix" evidence="4">
    <location>
        <begin position="213"/>
        <end position="226"/>
    </location>
</feature>
<feature type="strand" evidence="4">
    <location>
        <begin position="229"/>
        <end position="233"/>
    </location>
</feature>
<feature type="helix" evidence="4">
    <location>
        <begin position="242"/>
        <end position="252"/>
    </location>
</feature>
<feature type="turn" evidence="4">
    <location>
        <begin position="253"/>
        <end position="255"/>
    </location>
</feature>
<feature type="turn" evidence="4">
    <location>
        <begin position="272"/>
        <end position="275"/>
    </location>
</feature>
<feature type="strand" evidence="4">
    <location>
        <begin position="276"/>
        <end position="279"/>
    </location>
</feature>
<feature type="strand" evidence="4">
    <location>
        <begin position="282"/>
        <end position="291"/>
    </location>
</feature>
<feature type="strand" evidence="4">
    <location>
        <begin position="303"/>
        <end position="306"/>
    </location>
</feature>
<feature type="strand" evidence="4">
    <location>
        <begin position="310"/>
        <end position="314"/>
    </location>
</feature>
<feature type="turn" evidence="4">
    <location>
        <begin position="315"/>
        <end position="317"/>
    </location>
</feature>
<feature type="strand" evidence="4">
    <location>
        <begin position="318"/>
        <end position="322"/>
    </location>
</feature>
<feature type="helix" evidence="4">
    <location>
        <begin position="325"/>
        <end position="342"/>
    </location>
</feature>
<feature type="helix" evidence="4">
    <location>
        <begin position="348"/>
        <end position="358"/>
    </location>
</feature>
<feature type="strand" evidence="4">
    <location>
        <begin position="364"/>
        <end position="370"/>
    </location>
</feature>
<feature type="helix" evidence="4">
    <location>
        <begin position="375"/>
        <end position="379"/>
    </location>
</feature>
<evidence type="ECO:0000255" key="1"/>
<evidence type="ECO:0000255" key="2">
    <source>
        <dbReference type="PROSITE-ProRule" id="PRU01240"/>
    </source>
</evidence>
<evidence type="ECO:0000305" key="3"/>
<evidence type="ECO:0007829" key="4">
    <source>
        <dbReference type="PDB" id="1AH2"/>
    </source>
</evidence>
<protein>
    <recommendedName>
        <fullName>Alkaline protease</fullName>
        <ecNumber>3.4.21.-</ecNumber>
    </recommendedName>
</protein>
<organism>
    <name type="scientific">Alkalihalobacillus alcalophilus</name>
    <name type="common">Bacillus alcalophilus</name>
    <dbReference type="NCBI Taxonomy" id="1445"/>
    <lineage>
        <taxon>Bacteria</taxon>
        <taxon>Bacillati</taxon>
        <taxon>Bacillota</taxon>
        <taxon>Bacilli</taxon>
        <taxon>Bacillales</taxon>
        <taxon>Bacillaceae</taxon>
        <taxon>Alkalihalobacillus</taxon>
    </lineage>
</organism>
<proteinExistence type="evidence at protein level"/>
<keyword id="KW-0002">3D-structure</keyword>
<keyword id="KW-0106">Calcium</keyword>
<keyword id="KW-0378">Hydrolase</keyword>
<keyword id="KW-0479">Metal-binding</keyword>
<keyword id="KW-0645">Protease</keyword>
<keyword id="KW-0964">Secreted</keyword>
<keyword id="KW-0720">Serine protease</keyword>
<keyword id="KW-0732">Signal</keyword>
<keyword id="KW-0865">Zymogen</keyword>
<reference key="1">
    <citation type="journal article" date="1991" name="Appl. Environ. Microbiol.">
        <title>Cloning, characterization, and multiple chromosomal integration of a Bacillus alkaline protease gene.</title>
        <authorList>
            <person name="van der Laan J.C."/>
            <person name="Gerritse G."/>
            <person name="Mulleners L.J.M."/>
            <person name="van der Hoek R.A."/>
            <person name="Quax W.J."/>
        </authorList>
    </citation>
    <scope>NUCLEOTIDE SEQUENCE [GENOMIC DNA]</scope>
    <source>
        <strain>PB92</strain>
    </source>
</reference>
<reference key="2">
    <citation type="journal article" date="1992" name="Protein Eng.">
        <title>Crystal structure of the high-alkaline serine protease PB92 from Bacillus alcalophilus.</title>
        <authorList>
            <person name="van der Laan J.C."/>
            <person name="Teplyakov A.V."/>
            <person name="Kelders H."/>
            <person name="Kalk K.H."/>
            <person name="Misset O."/>
            <person name="Mulleners L.J.M."/>
            <person name="Dijkstra B.W."/>
        </authorList>
    </citation>
    <scope>X-RAY CRYSTALLOGRAPHY (1.75 ANGSTROMS)</scope>
    <source>
        <strain>PB92</strain>
    </source>
</reference>
<reference key="3">
    <citation type="journal article" date="1992" name="J. Mol. Biol.">
        <title>X-ray structure determination and comparison of two crystal forms of a variant (Asn115Arg) of the alkaline protease from Bacillus alcalophilus refined at 1.85-A resolution.</title>
        <authorList>
            <person name="Sobek H."/>
            <person name="Hecht H.-J."/>
            <person name="Aehle W."/>
            <person name="Schomburg D."/>
        </authorList>
    </citation>
    <scope>X-RAY CRYSTALLOGRAPHY (1.85 ANGSTROMS)</scope>
</reference>
<reference key="4">
    <citation type="journal article" date="1997" name="Structure">
        <title>The solution structure of serine protease PB92 from Bacillus alcalophilus presents a rigid fold with a flexible substrate-binding site.</title>
        <authorList>
            <person name="Martin J.R."/>
            <person name="Mulder F.A."/>
            <person name="Karimi-Nejad Y."/>
            <person name="van der Zwan J."/>
            <person name="Mariani M."/>
            <person name="Schipper D."/>
            <person name="Boelens R."/>
        </authorList>
    </citation>
    <scope>STRUCTURE BY NMR OF 112-380</scope>
    <source>
        <strain>PB92</strain>
    </source>
</reference>
<sequence>MKKPLGKIVASTALLISVAFSSSIASAAEEAKEKYLIGFNEQEAVSEFVEQVEANDEVAILSEEEEVEIELLHEFETIPVLSVELSPEDVDALELDPAISYIEEDAEVTTMAQSVPWGISRVQAPAAHNRGLTGSGVKVAVLDTGISTHPDLNIRGGASFVPGEPSTQDGNGHGTHVAGTIAALNNSIGVLGVAPNAELYAVKVLGASGSGSVSSIAQGLEWAGNNGMHVANLSLGSPSPSATLEQAVNSATSRGVLVVAASGNSGAGSISYPARYANAMAVGATDQNNNRASFSQYGAGLDIVAPGVNVQSTYPGSTYASLNGTSMATPHVAGAAALVKQKNPSWSNVQIRNHLKNTATSLGSTNLYGSGLVNAEAATR</sequence>
<comment type="cofactor">
    <cofactor>
        <name>Ca(2+)</name>
        <dbReference type="ChEBI" id="CHEBI:29108"/>
    </cofactor>
    <text>Binds 2 calcium ions per subunit.</text>
</comment>
<comment type="subcellular location">
    <subcellularLocation>
        <location>Secreted</location>
    </subcellularLocation>
</comment>
<comment type="similarity">
    <text evidence="3">Belongs to the peptidase S8 family.</text>
</comment>
<accession>P27693</accession>